<gene>
    <name evidence="1" type="primary">rpmC</name>
    <name type="ordered locus">YpAngola_A0592</name>
</gene>
<proteinExistence type="inferred from homology"/>
<reference key="1">
    <citation type="journal article" date="2010" name="J. Bacteriol.">
        <title>Genome sequence of the deep-rooted Yersinia pestis strain Angola reveals new insights into the evolution and pangenome of the plague bacterium.</title>
        <authorList>
            <person name="Eppinger M."/>
            <person name="Worsham P.L."/>
            <person name="Nikolich M.P."/>
            <person name="Riley D.R."/>
            <person name="Sebastian Y."/>
            <person name="Mou S."/>
            <person name="Achtman M."/>
            <person name="Lindler L.E."/>
            <person name="Ravel J."/>
        </authorList>
    </citation>
    <scope>NUCLEOTIDE SEQUENCE [LARGE SCALE GENOMIC DNA]</scope>
    <source>
        <strain>Angola</strain>
    </source>
</reference>
<dbReference type="EMBL" id="CP000901">
    <property type="protein sequence ID" value="ABX85286.1"/>
    <property type="molecule type" value="Genomic_DNA"/>
</dbReference>
<dbReference type="RefSeq" id="WP_002218942.1">
    <property type="nucleotide sequence ID" value="NZ_CP009935.1"/>
</dbReference>
<dbReference type="SMR" id="A9R904"/>
<dbReference type="GeneID" id="96663188"/>
<dbReference type="KEGG" id="ypg:YpAngola_A0592"/>
<dbReference type="PATRIC" id="fig|349746.12.peg.1541"/>
<dbReference type="GO" id="GO:0022625">
    <property type="term" value="C:cytosolic large ribosomal subunit"/>
    <property type="evidence" value="ECO:0007669"/>
    <property type="project" value="TreeGrafter"/>
</dbReference>
<dbReference type="GO" id="GO:0003735">
    <property type="term" value="F:structural constituent of ribosome"/>
    <property type="evidence" value="ECO:0007669"/>
    <property type="project" value="InterPro"/>
</dbReference>
<dbReference type="GO" id="GO:0006412">
    <property type="term" value="P:translation"/>
    <property type="evidence" value="ECO:0007669"/>
    <property type="project" value="UniProtKB-UniRule"/>
</dbReference>
<dbReference type="CDD" id="cd00427">
    <property type="entry name" value="Ribosomal_L29_HIP"/>
    <property type="match status" value="1"/>
</dbReference>
<dbReference type="FunFam" id="1.10.287.310:FF:000001">
    <property type="entry name" value="50S ribosomal protein L29"/>
    <property type="match status" value="1"/>
</dbReference>
<dbReference type="Gene3D" id="6.10.140.1970">
    <property type="match status" value="1"/>
</dbReference>
<dbReference type="HAMAP" id="MF_00374">
    <property type="entry name" value="Ribosomal_uL29"/>
    <property type="match status" value="1"/>
</dbReference>
<dbReference type="InterPro" id="IPR050063">
    <property type="entry name" value="Ribosomal_protein_uL29"/>
</dbReference>
<dbReference type="InterPro" id="IPR001854">
    <property type="entry name" value="Ribosomal_uL29"/>
</dbReference>
<dbReference type="InterPro" id="IPR018254">
    <property type="entry name" value="Ribosomal_uL29_CS"/>
</dbReference>
<dbReference type="InterPro" id="IPR036049">
    <property type="entry name" value="Ribosomal_uL29_sf"/>
</dbReference>
<dbReference type="NCBIfam" id="TIGR00012">
    <property type="entry name" value="L29"/>
    <property type="match status" value="1"/>
</dbReference>
<dbReference type="PANTHER" id="PTHR10916">
    <property type="entry name" value="60S RIBOSOMAL PROTEIN L35/50S RIBOSOMAL PROTEIN L29"/>
    <property type="match status" value="1"/>
</dbReference>
<dbReference type="PANTHER" id="PTHR10916:SF0">
    <property type="entry name" value="LARGE RIBOSOMAL SUBUNIT PROTEIN UL29C"/>
    <property type="match status" value="1"/>
</dbReference>
<dbReference type="Pfam" id="PF00831">
    <property type="entry name" value="Ribosomal_L29"/>
    <property type="match status" value="1"/>
</dbReference>
<dbReference type="SUPFAM" id="SSF46561">
    <property type="entry name" value="Ribosomal protein L29 (L29p)"/>
    <property type="match status" value="1"/>
</dbReference>
<dbReference type="PROSITE" id="PS00579">
    <property type="entry name" value="RIBOSOMAL_L29"/>
    <property type="match status" value="1"/>
</dbReference>
<protein>
    <recommendedName>
        <fullName evidence="1">Large ribosomal subunit protein uL29</fullName>
    </recommendedName>
    <alternativeName>
        <fullName evidence="2">50S ribosomal protein L29</fullName>
    </alternativeName>
</protein>
<sequence length="63" mass="7273">MKAQELREKSVEELNTELLNLLREQFNLRMQAASGQLQQTHLLKQVRRNVARVKTLLTEKAGA</sequence>
<accession>A9R904</accession>
<keyword id="KW-0687">Ribonucleoprotein</keyword>
<keyword id="KW-0689">Ribosomal protein</keyword>
<feature type="chain" id="PRO_1000121843" description="Large ribosomal subunit protein uL29">
    <location>
        <begin position="1"/>
        <end position="63"/>
    </location>
</feature>
<name>RL29_YERPG</name>
<comment type="similarity">
    <text evidence="1">Belongs to the universal ribosomal protein uL29 family.</text>
</comment>
<evidence type="ECO:0000255" key="1">
    <source>
        <dbReference type="HAMAP-Rule" id="MF_00374"/>
    </source>
</evidence>
<evidence type="ECO:0000305" key="2"/>
<organism>
    <name type="scientific">Yersinia pestis bv. Antiqua (strain Angola)</name>
    <dbReference type="NCBI Taxonomy" id="349746"/>
    <lineage>
        <taxon>Bacteria</taxon>
        <taxon>Pseudomonadati</taxon>
        <taxon>Pseudomonadota</taxon>
        <taxon>Gammaproteobacteria</taxon>
        <taxon>Enterobacterales</taxon>
        <taxon>Yersiniaceae</taxon>
        <taxon>Yersinia</taxon>
    </lineage>
</organism>